<comment type="function">
    <molecule>Gag-Pol polyprotein</molecule>
    <text evidence="1">Mediates, with Gag polyprotein, the essential events in virion assembly, including binding the plasma membrane, making the protein-protein interactions necessary to create spherical particles, recruiting the viral Env proteins, and packaging the genomic RNA via direct interactions with the RNA packaging sequence (Psi). Gag-Pol polyprotein may regulate its own translation, by the binding genomic RNA in the 5'-UTR. At low concentration, the polyprotein would promote translation, whereas at high concentration, the polyprotein would encapsidate genomic RNA and then shut off translation.</text>
</comment>
<comment type="function">
    <molecule>Matrix protein p17</molecule>
    <text evidence="7">Targets the polyprotein to the plasma membrane via a multipartite membrane-binding signal, that includes its myristoylated N-terminus. Matrix protein is part of the pre-integration complex. Implicated in the release from host cell mediated by Vpu. Binds to RNA.</text>
</comment>
<comment type="function">
    <molecule>Capsid protein p24</molecule>
    <text evidence="5 7">Forms the conical core that encapsulates the genomic RNA-nucleocapsid complex in the virion. Most core are conical, with only 7% tubular. The core is constituted by capsid protein hexamer subunits. The core is disassembled soon after virion entry (By similarity). Host restriction factors such as TRIM5-alpha or TRIMCyp bind retroviral capsids and cause premature capsid disassembly, leading to blocks in reverse transcription. Capsid restriction by TRIM5 is one of the factors which restricts HIV-1 to the human species. Host PIN1 apparently facilitates the virion uncoating. On the other hand, interactions with PDZD8 or CYPA stabilize the capsid.</text>
</comment>
<comment type="function">
    <molecule>Nucleocapsid protein p7</molecule>
    <text evidence="5">Encapsulates and protects viral dimeric unspliced genomic RNA (gRNA). Binds these RNAs through its zinc fingers. Acts as a nucleic acid chaperone which is involved in rearangement of nucleic acid secondary structure during gRNA retrotranscription. Also facilitates template switch leading to recombination. As part of the polyprotein, participates in gRNA dimerization, packaging, tRNA incorporation and virion assembly.</text>
</comment>
<comment type="function">
    <molecule>Protease</molecule>
    <text evidence="5 10">Aspartyl protease that mediates proteolytic cleavages of Gag and Gag-Pol polyproteins during or shortly after the release of the virion from the plasma membrane. Cleavages take place as an ordered, step-wise cascade to yield mature proteins. This process is called maturation. Displays maximal activity during the budding process just prior to particle release from the cell. Also cleaves Nef and Vif, probably concomitantly with viral structural proteins on maturation of virus particles. Hydrolyzes host EIF4GI and PABP1 in order to shut off the capped cellular mRNA translation. The resulting inhibition of cellular protein synthesis serves to ensure maximal viral gene expression and to evade host immune response. Also mediates cleavage of host YTHDF3. Mediates cleavage of host CARD8, thereby activating the CARD8 inflammasome, leading to the clearance of latent HIV-1 in patient CD4(+) T-cells after viral reactivation; in contrast, HIV-1 can evade CARD8-sensing when its protease remains inactive in infected cells prior to viral budding (By similarity).</text>
</comment>
<comment type="function">
    <molecule>Reverse transcriptase/ribonuclease H</molecule>
    <text evidence="5">Multifunctional enzyme that converts the viral RNA genome into dsDNA in the cytoplasm, shortly after virus entry into the cell. This enzyme displays a DNA polymerase activity that can copy either DNA or RNA templates, and a ribonuclease H (RNase H) activity that cleaves the RNA strand of RNA-DNA heteroduplexes in a partially processive 3' to 5' endonucleasic mode. Conversion of viral genomic RNA into dsDNA requires many steps. A tRNA(3)-Lys binds to the primer-binding site (PBS) situated at the 5'-end of the viral RNA. RT uses the 3' end of the tRNA primer to perform a short round of RNA-dependent minus-strand DNA synthesis. The reading proceeds through the U5 region and ends after the repeated (R) region which is present at both ends of viral RNA. The portion of the RNA-DNA heteroduplex is digested by the RNase H, resulting in a ssDNA product attached to the tRNA primer. This ssDNA/tRNA hybridizes with the identical R region situated at the 3' end of viral RNA. This template exchange, known as minus-strand DNA strong stop transfer, can be either intra- or intermolecular. RT uses the 3' end of this newly synthesized short ssDNA to perform the RNA-dependent minus-strand DNA synthesis of the whole template. RNase H digests the RNA template except for two polypurine tracts (PPTs) situated at the 5'-end and near the center of the genome. It is not clear if both polymerase and RNase H activities are simultaneous. RNase H probably can proceed both in a polymerase-dependent (RNA cut into small fragments by the same RT performing DNA synthesis) and a polymerase-independent mode (cleavage of remaining RNA fragments by free RTs). Secondly, RT performs DNA-directed plus-strand DNA synthesis using the PPTs that have not been removed by RNase H as primers. PPTs and tRNA primers are then removed by RNase H. The 3' and 5' ssDNA PBS regions hybridize to form a circular dsDNA intermediate. Strand displacement synthesis by RT to the PBS and PPT ends produces a blunt ended, linear dsDNA copy of the viral genome that includes long terminal repeats (LTRs) at both ends.</text>
</comment>
<comment type="function">
    <molecule>Integrase</molecule>
    <text evidence="5">Catalyzes viral DNA integration into the host chromosome, by performing a series of DNA cutting and joining reactions. This enzyme activity takes place after virion entry into a cell and reverse transcription of the RNA genome in dsDNA. The first step in the integration process is 3' processing. This step requires a complex comprising the viral genome, matrix protein, Vpr and integrase. This complex is called the pre-integration complex (PIC). The integrase protein removes 2 nucleotides from each 3' end of the viral DNA, leaving recessed CA OH's at the 3' ends. In the second step, the PIC enters cell nucleus. This process is mediated through integrase and Vpr proteins, and allows the virus to infect a non dividing cell. This ability to enter the nucleus is specific of lentiviruses, other retroviruses cannot and rely on cell division to access cell chromosomes. In the third step, termed strand transfer, the integrase protein joins the previously processed 3' ends to the 5' ends of strands of target cellular DNA at the site of integration. The 5'-ends are produced by integrase-catalyzed staggered cuts, 5 bp apart. A Y-shaped, gapped, recombination intermediate results, with the 5'-ends of the viral DNA strands and the 3' ends of target DNA strands remaining unjoined, flanking a gap of 5 bp. The last step is viral DNA integration into host chromosome. This involves host DNA repair synthesis in which the 5 bp gaps between the unjoined strands are filled in and then ligated. Since this process occurs at both cuts flanking the HIV genome, a 5 bp duplication of host DNA is produced at the ends of HIV-1 integration. Alternatively, Integrase may catalyze the excision of viral DNA just after strand transfer, this is termed disintegration.</text>
</comment>
<comment type="catalytic activity">
    <reaction evidence="10">
        <text>Specific for a P1 residue that is hydrophobic, and P1' variable, but often Pro.</text>
        <dbReference type="EC" id="3.4.23.16"/>
    </reaction>
</comment>
<comment type="catalytic activity">
    <reaction evidence="1">
        <text>Endohydrolysis of RNA in RNA/DNA hybrids. Three different cleavage modes: 1. sequence-specific internal cleavage of RNA. Human immunodeficiency virus type 1 and Moloney murine leukemia virus enzymes prefer to cleave the RNA strand one nucleotide away from the RNA-DNA junction. 2. RNA 5'-end directed cleavage 13-19 nucleotides from the RNA end. 3. DNA 3'-end directed cleavage 15-20 nucleotides away from the primer terminus.</text>
        <dbReference type="EC" id="3.1.26.13"/>
    </reaction>
</comment>
<comment type="catalytic activity">
    <reaction evidence="1">
        <text>3'-end directed exonucleolytic cleavage of viral RNA-DNA hybrid.</text>
        <dbReference type="EC" id="3.1.13.2"/>
    </reaction>
</comment>
<comment type="catalytic activity">
    <reaction evidence="11">
        <text>DNA(n) + a 2'-deoxyribonucleoside 5'-triphosphate = DNA(n+1) + diphosphate</text>
        <dbReference type="Rhea" id="RHEA:22508"/>
        <dbReference type="Rhea" id="RHEA-COMP:17339"/>
        <dbReference type="Rhea" id="RHEA-COMP:17340"/>
        <dbReference type="ChEBI" id="CHEBI:33019"/>
        <dbReference type="ChEBI" id="CHEBI:61560"/>
        <dbReference type="ChEBI" id="CHEBI:173112"/>
        <dbReference type="EC" id="2.7.7.49"/>
    </reaction>
</comment>
<comment type="catalytic activity">
    <reaction evidence="11">
        <text>DNA(n) + a 2'-deoxyribonucleoside 5'-triphosphate = DNA(n+1) + diphosphate</text>
        <dbReference type="Rhea" id="RHEA:22508"/>
        <dbReference type="Rhea" id="RHEA-COMP:17339"/>
        <dbReference type="Rhea" id="RHEA-COMP:17340"/>
        <dbReference type="ChEBI" id="CHEBI:33019"/>
        <dbReference type="ChEBI" id="CHEBI:61560"/>
        <dbReference type="ChEBI" id="CHEBI:173112"/>
        <dbReference type="EC" id="2.7.7.7"/>
    </reaction>
</comment>
<comment type="cofactor">
    <cofactor evidence="1">
        <name>Mg(2+)</name>
        <dbReference type="ChEBI" id="CHEBI:18420"/>
    </cofactor>
    <text evidence="1">Binds 2 magnesium ions for reverse transcriptase polymerase activity.</text>
</comment>
<comment type="cofactor">
    <cofactor evidence="1">
        <name>Mg(2+)</name>
        <dbReference type="ChEBI" id="CHEBI:18420"/>
    </cofactor>
    <text evidence="1">Binds 2 magnesium ions for ribonuclease H (RNase H) activity. Substrate-binding is a precondition for magnesium binding.</text>
</comment>
<comment type="cofactor">
    <cofactor evidence="1">
        <name>Mg(2+)</name>
        <dbReference type="ChEBI" id="CHEBI:18420"/>
    </cofactor>
    <text evidence="1">Magnesium ions are required for integrase activity. Binds at least 1, maybe 2 magnesium ions.</text>
</comment>
<comment type="activity regulation">
    <text evidence="1">Protease: The viral protease is inhibited by many synthetic protease inhibitors (PIs), such as amprenavir, atazanavir, indinavir, loprinavir, nelfinavir, ritonavir and saquinavir. Use of protease inhibitors in tritherapy regimens permit more ambitious therapeutic strategies. Reverse transcriptase/ribonuclease H: RT can be inhibited either by nucleoside RT inhibitors (NRTIs) or by non nucleoside RT inhibitors (NNRTIs). NRTIs act as chain terminators, whereas NNRTIs inhibit DNA polymerization by binding a small hydrophobic pocket near the RT active site and inducing an allosteric change in this region. Classical NRTIs are abacavir, adefovir (PMEA), didanosine (ddI), lamivudine (3TC), stavudine (d4T), tenofovir (PMPA), zalcitabine (ddC), and zidovudine (AZT). Classical NNRTIs are atevirdine (BHAP U-87201E), delavirdine, efavirenz (DMP-266), emivirine (I-EBU), and nevirapine (BI-RG-587). The tritherapies used as a basic effective treatment of AIDS associate two NRTIs and one NNRTI.</text>
</comment>
<comment type="subunit">
    <molecule>Matrix protein p17</molecule>
    <text evidence="5 7">Homotrimer; further assembles as hexamers of trimers (By similarity). Interacts with gp41 (via C-terminus) (By similarity). Interacts with host CALM1; this interaction induces a conformational change in the Matrix protein, triggering exposure of the myristate group (By similarity). Interacts with host AP3D1; this interaction allows the polyprotein trafficking to multivesicular bodies during virus assembly (By similarity). Part of the pre-integration complex (PIC) which is composed of viral genome, matrix protein, Vpr and integrase (By similarity).</text>
</comment>
<comment type="subunit">
    <molecule>Capsid protein p24</molecule>
    <text evidence="5 7">Homodimer; the homodimer further multimerizes as homohexamers or homopentamers. Interacts with human PPIA/CYPA (By similarity); This interaction stabilizes the capsid. Interacts with human NUP153 (By similarity). Interacts with host PDZD8; this interaction stabilizes the capsid (By similarity). Interacts with monkey TRIM5; this interaction destabilizes the capsid (By similarity).</text>
</comment>
<comment type="subunit">
    <molecule>Protease</molecule>
    <text evidence="5 7">Homodimer, whose active site consists of two apposed aspartic acid residues.</text>
</comment>
<comment type="subunit">
    <molecule>Reverse transcriptase/ribonuclease H</molecule>
    <text evidence="3">Heterodimer of p66 RT and p51 RT (RT p66/p51) (By similarity). Heterodimerization of RT is essential for DNA polymerase activity (By similarity). The overall folding of the subdomains is similar in p66 RT and p51 RT but the spatial arrangements of the subdomains are dramatically different (By similarity).</text>
</comment>
<comment type="subunit">
    <molecule>Integrase</molecule>
    <text evidence="4 5 7">Homotetramer; may further associate as a homohexadecamer (By similarity). Part of the pre-integration complex (PIC) which is composed of viral genome, matrix protein, Vpr and integrase. Interacts with human SMARCB1/INI1 and human PSIP1/LEDGF isoform 1. Interacts with human KPNA3; this interaction might play a role in nuclear import of the pre-integration complex (By similarity). Interacts with human NUP153; this interaction might play a role in nuclear import of the pre-integration complex (By similarity).</text>
</comment>
<comment type="subcellular location">
    <molecule>Gag-Pol polyprotein</molecule>
    <subcellularLocation>
        <location>Host cell membrane</location>
        <topology>Lipid-anchor</topology>
    </subcellularLocation>
    <subcellularLocation>
        <location>Host endosome</location>
        <location>Host multivesicular body</location>
    </subcellularLocation>
    <text evidence="7">These locations are linked to virus assembly sites. The main location is the cell membrane, but under some circumstances, late endosomal compartments can serve as productive sites for virion assembly.</text>
</comment>
<comment type="subcellular location">
    <molecule>Matrix protein p17</molecule>
    <subcellularLocation>
        <location>Virion membrane</location>
        <topology evidence="18">Lipid-anchor</topology>
    </subcellularLocation>
    <subcellularLocation>
        <location evidence="1">Host nucleus</location>
    </subcellularLocation>
    <subcellularLocation>
        <location evidence="1">Host cytoplasm</location>
    </subcellularLocation>
</comment>
<comment type="subcellular location">
    <molecule>Capsid protein p24</molecule>
    <subcellularLocation>
        <location evidence="18">Virion</location>
    </subcellularLocation>
</comment>
<comment type="subcellular location">
    <molecule>Nucleocapsid protein p7</molecule>
    <subcellularLocation>
        <location evidence="18">Virion</location>
    </subcellularLocation>
</comment>
<comment type="subcellular location">
    <molecule>Reverse transcriptase/ribonuclease H</molecule>
    <subcellularLocation>
        <location evidence="18">Virion</location>
    </subcellularLocation>
</comment>
<comment type="subcellular location">
    <molecule>Integrase</molecule>
    <subcellularLocation>
        <location evidence="18">Virion</location>
    </subcellularLocation>
    <subcellularLocation>
        <location evidence="18">Host nucleus</location>
    </subcellularLocation>
    <subcellularLocation>
        <location evidence="18">Host cytoplasm</location>
    </subcellularLocation>
    <text evidence="18">Nuclear at initial phase, cytoplasmic at assembly.</text>
</comment>
<comment type="alternative products">
    <event type="ribosomal frameshifting"/>
    <isoform>
        <id>O41798-1</id>
        <name>Gag-Pol polyprotein</name>
        <sequence type="displayed"/>
    </isoform>
    <isoform>
        <id>P0C1K7-1</id>
        <name>Gag polyprotein</name>
        <sequence type="external"/>
    </isoform>
    <text>Translation results in the formation of the Gag polyprotein most of the time. Ribosomal frameshifting at the gag-pol genes boundary occurs at low frequency and produces the Gag-Pol polyprotein. This strategy of translation probably allows the virus to modulate the quantity of each viral protein. Maintenance of a correct Gag to Gag-Pol ratio is essential for RNA dimerization and viral infectivity.</text>
</comment>
<comment type="domain">
    <molecule>Reverse transcriptase/ribonuclease H</molecule>
    <text evidence="1">RT is structured in five subdomains: finger, palm, thumb, connection and RNase H. Within the palm subdomain, the 'primer grip' region is thought to be involved in the positioning of the primer terminus for accommodating the incoming nucleotide. The RNase H domain stabilizes the association of RT with primer-template.</text>
</comment>
<comment type="domain">
    <molecule>Reverse transcriptase/ribonuclease H</molecule>
    <text evidence="1">The tryptophan repeat motif is involved in RT p66/p51 dimerization (By similarity).</text>
</comment>
<comment type="domain">
    <molecule>Integrase</molecule>
    <text evidence="1">The core domain contains the D-x(n)-D-x(35)-E motif, named for the phylogenetically conserved glutamic acid and aspartic acid residues and the invariant 35 amino acid spacing between the second and third acidic residues. Each acidic residue of the D,D(35)E motif is independently essential for the 3'-processing and strand transfer activities of purified integrase protein.</text>
</comment>
<comment type="PTM">
    <molecule>Gag-Pol polyprotein</molecule>
    <text evidence="5 11">Specific enzymatic cleavages by the viral protease yield mature proteins. The protease is released by autocatalytic cleavage. The polyprotein is cleaved during and after budding, this process is termed maturation. Proteolytic cleavage of p66 RT removes the RNase H domain to yield the p51 RT subunit. Nucleocapsid protein p7 might be further cleaved after virus entry.</text>
</comment>
<comment type="PTM">
    <molecule>Matrix protein p17</molecule>
    <text evidence="5">Tyrosine phosphorylated presumably in the virion by a host kinase. Phosphorylation is apparently not a major regulator of membrane association.</text>
</comment>
<comment type="PTM">
    <molecule>Capsid protein p24</molecule>
    <text evidence="6">Phosphorylated possibly by host MAPK1; this phosphorylation is necessary for Pin1-mediated virion uncoating.</text>
</comment>
<comment type="PTM">
    <molecule>Nucleocapsid protein p7</molecule>
    <text evidence="2">Methylated by host PRMT6, impairing its function by reducing RNA annealing and the initiation of reverse transcription.</text>
</comment>
<comment type="miscellaneous">
    <molecule>Reverse transcriptase/ribonuclease H</molecule>
    <text evidence="1">Error-prone enzyme that lacks a proof-reading function. High mutations rate is a direct consequence of this characteristic. RT also displays frequent template switching leading to high recombination rate. Recombination mostly occurs between homologous regions of the two copackaged RNA genomes. If these two RNA molecules derive from different viral strains, reverse transcription will give rise to highly recombinated proviral DNAs.</text>
</comment>
<comment type="miscellaneous">
    <text>HIV-1 lineages are divided in three main groups, M (for Major), O (for Outlier), and N (for New, or Non-M, Non-O). The vast majority of strains found worldwide belong to the group M. Group O seems to be endemic to and largely confined to Cameroon and neighboring countries in West Central Africa, where these viruses represent a small minority of HIV-1 strains. The group N is represented by a limited number of isolates from Cameroonian persons. The group M is further subdivided in 9 clades or subtypes (A to D, F to H, J and K).</text>
</comment>
<comment type="miscellaneous">
    <text>Resistance to inhibitors associated with mutations are observed both in viral protease and in reverse transcriptase. Most of the time, single mutations confer only a modest reduction in drug susceptibility. Combination of several mutations is usually required to develop a high-level drug resistance. These mutations are predominantly found in clade B viruses and not in other genotypes. They are listed in the clade B representative isolate HXB2 (AC P04585).</text>
</comment>
<comment type="miscellaneous">
    <molecule>Isoform Gag-Pol polyprotein</molecule>
    <text>Produced by -1 ribosomal frameshifting.</text>
</comment>
<comment type="online information" name="HIV drug resistance mutations">
    <link uri="https://www.iasusa.org/hiv-drug-resistance/hiv-drug-resistance-mutations/"/>
</comment>
<comment type="online information" name="hivdb">
    <link uri="https://hivdb.stanford.edu"/>
    <text>HIV drug resistance database</text>
</comment>
<name>POL_HV19N</name>
<feature type="initiator methionine" description="Removed; by host" evidence="1">
    <location>
        <position position="1"/>
    </location>
</feature>
<feature type="chain" id="PRO_0000261256" description="Gag-Pol polyprotein">
    <location>
        <begin position="2"/>
        <end position="1435"/>
    </location>
</feature>
<feature type="chain" id="PRO_0000246456" description="Matrix protein p17" evidence="1">
    <location>
        <begin position="2"/>
        <end position="131"/>
    </location>
</feature>
<feature type="chain" id="PRO_0000246457" description="Capsid protein p24" evidence="1">
    <location>
        <begin position="132"/>
        <end position="362"/>
    </location>
</feature>
<feature type="peptide" id="PRO_0000246458" description="Spacer peptide 1" evidence="1">
    <location>
        <begin position="363"/>
        <end position="378"/>
    </location>
</feature>
<feature type="chain" id="PRO_0000246459" description="Nucleocapsid protein p7" evidence="1">
    <location>
        <begin position="379"/>
        <end position="433"/>
    </location>
</feature>
<feature type="peptide" id="PRO_0000246705" description="Transframe peptide" evidence="8">
    <location>
        <begin position="434"/>
        <end position="441"/>
    </location>
</feature>
<feature type="chain" id="PRO_0000246460" description="p6-pol" evidence="8">
    <location>
        <begin position="442"/>
        <end position="488"/>
    </location>
</feature>
<feature type="chain" id="PRO_0000246461" description="Protease" evidence="1">
    <location>
        <begin position="489"/>
        <end position="587"/>
    </location>
</feature>
<feature type="chain" id="PRO_0000246462" description="Reverse transcriptase/ribonuclease H" evidence="1">
    <location>
        <begin position="588"/>
        <end position="1147"/>
    </location>
</feature>
<feature type="chain" id="PRO_0000246463" description="p51 RT" evidence="1">
    <location>
        <begin position="588"/>
        <end position="1027"/>
    </location>
</feature>
<feature type="chain" id="PRO_0000246464" description="p15" evidence="1">
    <location>
        <begin position="1028"/>
        <end position="1147"/>
    </location>
</feature>
<feature type="chain" id="PRO_0000246465" description="Integrase" evidence="1">
    <location>
        <begin position="1148"/>
        <end position="1435"/>
    </location>
</feature>
<feature type="domain" description="Peptidase A2" evidence="10">
    <location>
        <begin position="508"/>
        <end position="577"/>
    </location>
</feature>
<feature type="domain" description="Reverse transcriptase" evidence="11">
    <location>
        <begin position="631"/>
        <end position="821"/>
    </location>
</feature>
<feature type="domain" description="RNase H type-1" evidence="12">
    <location>
        <begin position="1021"/>
        <end position="1144"/>
    </location>
</feature>
<feature type="domain" description="Integrase catalytic" evidence="14">
    <location>
        <begin position="1201"/>
        <end position="1351"/>
    </location>
</feature>
<feature type="zinc finger region" description="CCHC-type 1" evidence="9">
    <location>
        <begin position="391"/>
        <end position="408"/>
    </location>
</feature>
<feature type="zinc finger region" description="CCHC-type 2" evidence="9">
    <location>
        <begin position="412"/>
        <end position="429"/>
    </location>
</feature>
<feature type="zinc finger region" description="Integrase-type" evidence="13">
    <location>
        <begin position="1150"/>
        <end position="1191"/>
    </location>
</feature>
<feature type="DNA-binding region" description="Integrase-type" evidence="15">
    <location>
        <begin position="1370"/>
        <end position="1417"/>
    </location>
</feature>
<feature type="region of interest" description="Interaction with Gp41" evidence="7">
    <location>
        <begin position="7"/>
        <end position="31"/>
    </location>
</feature>
<feature type="region of interest" description="Interaction with host CALM1" evidence="5">
    <location>
        <begin position="8"/>
        <end position="43"/>
    </location>
</feature>
<feature type="region of interest" description="Interaction with host AP3D1" evidence="7">
    <location>
        <begin position="12"/>
        <end position="19"/>
    </location>
</feature>
<feature type="region of interest" description="Interaction with membrane phosphatidylinositol 4,5-bisphosphate and RNA" evidence="7">
    <location>
        <begin position="14"/>
        <end position="33"/>
    </location>
</feature>
<feature type="region of interest" description="Interaction with membrane phosphatidylinositol 4,5-bisphosphate" evidence="7">
    <location>
        <begin position="72"/>
        <end position="76"/>
    </location>
</feature>
<feature type="region of interest" description="Disordered" evidence="17">
    <location>
        <begin position="107"/>
        <end position="126"/>
    </location>
</feature>
<feature type="region of interest" description="Interaction with human PPIA/CYPA and NUP153" evidence="7">
    <location>
        <begin position="188"/>
        <end position="226"/>
    </location>
</feature>
<feature type="region of interest" description="Dimerization/Multimerization of capsid protein p24" evidence="5">
    <location>
        <begin position="276"/>
        <end position="362"/>
    </location>
</feature>
<feature type="region of interest" description="Disordered" evidence="17">
    <location>
        <begin position="444"/>
        <end position="478"/>
    </location>
</feature>
<feature type="region of interest" description="Dimerization of protease" evidence="5">
    <location>
        <begin position="489"/>
        <end position="493"/>
    </location>
</feature>
<feature type="region of interest" description="Dimerization of protease" evidence="5">
    <location>
        <begin position="537"/>
        <end position="543"/>
    </location>
</feature>
<feature type="region of interest" description="Dimerization of protease" evidence="5">
    <location>
        <begin position="576"/>
        <end position="588"/>
    </location>
</feature>
<feature type="region of interest" description="RT 'primer grip'" evidence="1">
    <location>
        <begin position="814"/>
        <end position="822"/>
    </location>
</feature>
<feature type="short sequence motif" description="Nuclear export signal" evidence="1">
    <location>
        <begin position="16"/>
        <end position="22"/>
    </location>
</feature>
<feature type="short sequence motif" description="Nuclear localization signal" evidence="1">
    <location>
        <begin position="26"/>
        <end position="32"/>
    </location>
</feature>
<feature type="short sequence motif" description="Tryptophan repeat motif" evidence="1">
    <location>
        <begin position="985"/>
        <end position="1001"/>
    </location>
</feature>
<feature type="compositionally biased region" description="Polar residues" evidence="17">
    <location>
        <begin position="108"/>
        <end position="126"/>
    </location>
</feature>
<feature type="compositionally biased region" description="Basic and acidic residues" evidence="17">
    <location>
        <begin position="445"/>
        <end position="455"/>
    </location>
</feature>
<feature type="active site" description="For protease activity; shared with dimeric partner" evidence="16">
    <location>
        <position position="513"/>
    </location>
</feature>
<feature type="binding site" evidence="1">
    <location>
        <position position="697"/>
    </location>
    <ligand>
        <name>Mg(2+)</name>
        <dbReference type="ChEBI" id="CHEBI:18420"/>
        <label>1</label>
        <note>catalytic; for reverse transcriptase activity</note>
    </ligand>
</feature>
<feature type="binding site" evidence="1">
    <location>
        <position position="772"/>
    </location>
    <ligand>
        <name>Mg(2+)</name>
        <dbReference type="ChEBI" id="CHEBI:18420"/>
        <label>1</label>
        <note>catalytic; for reverse transcriptase activity</note>
    </ligand>
</feature>
<feature type="binding site" evidence="1">
    <location>
        <position position="773"/>
    </location>
    <ligand>
        <name>Mg(2+)</name>
        <dbReference type="ChEBI" id="CHEBI:18420"/>
        <label>1</label>
        <note>catalytic; for reverse transcriptase activity</note>
    </ligand>
</feature>
<feature type="binding site" evidence="1">
    <location>
        <position position="1030"/>
    </location>
    <ligand>
        <name>Mg(2+)</name>
        <dbReference type="ChEBI" id="CHEBI:18420"/>
        <label>2</label>
        <note>catalytic; for RNase H activity</note>
    </ligand>
</feature>
<feature type="binding site" evidence="1">
    <location>
        <position position="1065"/>
    </location>
    <ligand>
        <name>Mg(2+)</name>
        <dbReference type="ChEBI" id="CHEBI:18420"/>
        <label>2</label>
        <note>catalytic; for RNase H activity</note>
    </ligand>
</feature>
<feature type="binding site" evidence="1">
    <location>
        <position position="1085"/>
    </location>
    <ligand>
        <name>Mg(2+)</name>
        <dbReference type="ChEBI" id="CHEBI:18420"/>
        <label>2</label>
        <note>catalytic; for RNase H activity</note>
    </ligand>
</feature>
<feature type="binding site" evidence="1">
    <location>
        <position position="1136"/>
    </location>
    <ligand>
        <name>Mg(2+)</name>
        <dbReference type="ChEBI" id="CHEBI:18420"/>
        <label>2</label>
        <note>catalytic; for RNase H activity</note>
    </ligand>
</feature>
<feature type="binding site" evidence="13">
    <location>
        <position position="1159"/>
    </location>
    <ligand>
        <name>Zn(2+)</name>
        <dbReference type="ChEBI" id="CHEBI:29105"/>
    </ligand>
</feature>
<feature type="binding site" evidence="13">
    <location>
        <position position="1163"/>
    </location>
    <ligand>
        <name>Zn(2+)</name>
        <dbReference type="ChEBI" id="CHEBI:29105"/>
    </ligand>
</feature>
<feature type="binding site" evidence="13">
    <location>
        <position position="1187"/>
    </location>
    <ligand>
        <name>Zn(2+)</name>
        <dbReference type="ChEBI" id="CHEBI:29105"/>
    </ligand>
</feature>
<feature type="binding site" evidence="13">
    <location>
        <position position="1190"/>
    </location>
    <ligand>
        <name>Zn(2+)</name>
        <dbReference type="ChEBI" id="CHEBI:29105"/>
    </ligand>
</feature>
<feature type="binding site" evidence="1">
    <location>
        <position position="1211"/>
    </location>
    <ligand>
        <name>Mg(2+)</name>
        <dbReference type="ChEBI" id="CHEBI:18420"/>
        <label>3</label>
        <note>catalytic; for integrase activity</note>
    </ligand>
</feature>
<feature type="binding site" evidence="1">
    <location>
        <position position="1263"/>
    </location>
    <ligand>
        <name>Mg(2+)</name>
        <dbReference type="ChEBI" id="CHEBI:18420"/>
        <label>3</label>
        <note>catalytic; for integrase activity</note>
    </ligand>
</feature>
<feature type="binding site" evidence="5">
    <location>
        <position position="1299"/>
    </location>
    <ligand>
        <name>Mg(2+)</name>
        <dbReference type="ChEBI" id="CHEBI:18420"/>
        <label>3</label>
        <note>catalytic; for integrase activity</note>
    </ligand>
</feature>
<feature type="site" description="Cleavage; by viral protease" evidence="1">
    <location>
        <begin position="131"/>
        <end position="132"/>
    </location>
</feature>
<feature type="site" description="Cis/trans isomerization of proline peptide bond; by human PPIA/CYPA" evidence="1">
    <location>
        <begin position="220"/>
        <end position="221"/>
    </location>
</feature>
<feature type="site" description="Cleavage; by viral protease" evidence="1">
    <location>
        <begin position="362"/>
        <end position="363"/>
    </location>
</feature>
<feature type="site" description="Cleavage; by viral protease" evidence="1">
    <location>
        <begin position="378"/>
        <end position="379"/>
    </location>
</feature>
<feature type="site" description="Cleavage; by viral protease" evidence="8">
    <location>
        <begin position="433"/>
        <end position="434"/>
    </location>
</feature>
<feature type="site" description="Cleavage; by viral protease" evidence="1">
    <location>
        <begin position="441"/>
        <end position="442"/>
    </location>
</feature>
<feature type="site" description="Cleavage; by viral protease" evidence="1">
    <location>
        <begin position="488"/>
        <end position="489"/>
    </location>
</feature>
<feature type="site" description="Cleavage; by viral protease" evidence="1">
    <location>
        <begin position="587"/>
        <end position="588"/>
    </location>
</feature>
<feature type="site" description="Essential for RT p66/p51 heterodimerization" evidence="1">
    <location>
        <position position="988"/>
    </location>
</feature>
<feature type="site" description="Essential for RT p66/p51 heterodimerization" evidence="1">
    <location>
        <position position="1001"/>
    </location>
</feature>
<feature type="site" description="Cleavage; by viral protease; partial" evidence="8">
    <location>
        <begin position="1026" status="uncertain"/>
        <end position="1027" status="uncertain"/>
    </location>
</feature>
<feature type="site" description="Cleavage; by viral protease" evidence="1">
    <location>
        <begin position="1147"/>
        <end position="1148"/>
    </location>
</feature>
<feature type="modified residue" description="Phosphotyrosine; by host" evidence="1">
    <location>
        <position position="131"/>
    </location>
</feature>
<feature type="lipid moiety-binding region" description="N-myristoyl glycine; by host" evidence="1">
    <location>
        <position position="2"/>
    </location>
</feature>
<organism>
    <name type="scientific">Human immunodeficiency virus type 1 group M subtype G (isolate 92NG083)</name>
    <name type="common">HIV-1</name>
    <dbReference type="NCBI Taxonomy" id="388825"/>
    <lineage>
        <taxon>Viruses</taxon>
        <taxon>Riboviria</taxon>
        <taxon>Pararnavirae</taxon>
        <taxon>Artverviricota</taxon>
        <taxon>Revtraviricetes</taxon>
        <taxon>Ortervirales</taxon>
        <taxon>Retroviridae</taxon>
        <taxon>Orthoretrovirinae</taxon>
        <taxon>Lentivirus</taxon>
        <taxon>Human immunodeficiency virus type 1</taxon>
    </lineage>
</organism>
<sequence length="1435" mass="161214">MGARASVLSGGKLDSWEKIRLRPGGRKKYKLKHIVWASRELGRFALNRDLLETAEGCVQIMKQLQPALTGTEELRSLFNTVATLYCVHQKIEVKDTKEAPEEVEKIQKNSQQEIQQAAKNEGNSNPVSQNYPIVQNAQGQMIHQAISPWTLNAWVKVVEEKAFSPEVIPMFSALSEGATPQDLNTMLNTVGGHQAAMQMLKDTINDEAAEWDRIHPQQAGPIPPGQIREPSGSDIAGTTSTLQEQIRWMTSNPPIPVGEIYKRWIILGLNKIVRMYSPVSILDIRQGPKEPFRDYVDRFFKTLRAEQATQEVKGWMTDTLLVQNANPDCKTILRALGPGATLEEMMTACQGVGGPSHKARVLAEAMSQASGAAAAAIMMQKSNFKGPRRIIKCFNCGKEGHLARNCRAPRKKGCWKCGKEGHQMKECTERQANFLRENLAFQQGEARKLSPEQDRANSPTSRELRIRRGDSPLPEAGAKGEGAISLNFPQITLWQRPLVTVKIGGQLIEALLDTGADDTVLEGINLPGKWKPKMIGGIGGFIKVRQYDQILIEIGGKKAIGTVLVGPTPINIIGRNMLTQIGCTLNFPISPIETVPVKLKPGMDGPRVKQWPLTEEKIKALTEICKDMEKEGKISKIGPENPYNTPIFAIKKKDSTKWRKLVDFRELNKRTQDFWEVQLGIPHPAGLKKKRSVTVLDVGDAYFSVPLDKDFRKYTAFTIPSINNETPGIRYQYNVLPQGWKGSPAIFQSSMTKILEPSRTKNPEMVIYQYMDDLYVGSDLEIGQHRAKIEELREHLLKWGLTTPDKKHQKEPPFLWMGYELHPDKWTVQPIQLPEKEDWTVNDIQKLVGKLNWASQIYPGIKVKHLCRLLRGAKALTDIVPLTAEAEMELAENREILKEPVHGVYHDPSKELIAEVQKQGPDQWTYQIYQEPYKNLKTGKYAKRGSAHTNDVKQLTEVVQKIATEGIVIWGKIPKFKLPIRKETWEVWWTEYWQAAWIPEWEFVNTPPLVKLWYQLETEPIPGAETYYVDGAANRETKLGKAGHVTDKGKQKIITLTETTNQKAELHAIQLALQDSRPEVNIVTDSQYALGIIQAQPDRSGSELVNQIIEQLIKKEKVYLSWVPAHKGIGGNEQVDKLVSSGIRKVLFLDGIDKAQEEHERYHSNWRAMASDFNLPPVVAKEIVASCDKCQLKGEAMHGQVDCSPGIWQLDCTHLEGKIIIVAVHVASGYIEAEVIPAETGQETAYFILKLAGRWPVKVIHTDNGPNFISAAVKAACWWANITQEFGIPYNPQSQGVVESMNKELKKIIGQVGDQAEHLKTAVQMAVFIHNFKRKGGIGGYSAGERIIDIIASDIQTKELQKQIIKIQNFRVYYRDSRDPIWKGPAKLLWKGEGAVVIQDNNEIKVVPRRKAKILKDYGKQMAGGDCVAGRQDED</sequence>
<evidence type="ECO:0000250" key="1"/>
<evidence type="ECO:0000250" key="2">
    <source>
        <dbReference type="UniProtKB" id="P03347"/>
    </source>
</evidence>
<evidence type="ECO:0000250" key="3">
    <source>
        <dbReference type="UniProtKB" id="P03366"/>
    </source>
</evidence>
<evidence type="ECO:0000250" key="4">
    <source>
        <dbReference type="UniProtKB" id="P03367"/>
    </source>
</evidence>
<evidence type="ECO:0000250" key="5">
    <source>
        <dbReference type="UniProtKB" id="P04585"/>
    </source>
</evidence>
<evidence type="ECO:0000250" key="6">
    <source>
        <dbReference type="UniProtKB" id="P12493"/>
    </source>
</evidence>
<evidence type="ECO:0000250" key="7">
    <source>
        <dbReference type="UniProtKB" id="P12497"/>
    </source>
</evidence>
<evidence type="ECO:0000255" key="8"/>
<evidence type="ECO:0000255" key="9">
    <source>
        <dbReference type="PROSITE-ProRule" id="PRU00047"/>
    </source>
</evidence>
<evidence type="ECO:0000255" key="10">
    <source>
        <dbReference type="PROSITE-ProRule" id="PRU00275"/>
    </source>
</evidence>
<evidence type="ECO:0000255" key="11">
    <source>
        <dbReference type="PROSITE-ProRule" id="PRU00405"/>
    </source>
</evidence>
<evidence type="ECO:0000255" key="12">
    <source>
        <dbReference type="PROSITE-ProRule" id="PRU00408"/>
    </source>
</evidence>
<evidence type="ECO:0000255" key="13">
    <source>
        <dbReference type="PROSITE-ProRule" id="PRU00450"/>
    </source>
</evidence>
<evidence type="ECO:0000255" key="14">
    <source>
        <dbReference type="PROSITE-ProRule" id="PRU00457"/>
    </source>
</evidence>
<evidence type="ECO:0000255" key="15">
    <source>
        <dbReference type="PROSITE-ProRule" id="PRU00506"/>
    </source>
</evidence>
<evidence type="ECO:0000255" key="16">
    <source>
        <dbReference type="PROSITE-ProRule" id="PRU10094"/>
    </source>
</evidence>
<evidence type="ECO:0000256" key="17">
    <source>
        <dbReference type="SAM" id="MobiDB-lite"/>
    </source>
</evidence>
<evidence type="ECO:0000305" key="18"/>
<gene>
    <name type="primary">gag-pol</name>
</gene>
<accession>O41798</accession>
<reference key="1">
    <citation type="journal article" date="1998" name="J. Virol.">
        <title>A comprehensive panel of near-full-length clones and reference sequences for non-subtype B isolates of human immunodeficiency virus type 1.</title>
        <authorList>
            <person name="Gao F."/>
            <person name="Robertson D.L."/>
            <person name="Carruthers C.D."/>
            <person name="Morrison S.G."/>
            <person name="Jian B."/>
            <person name="Chen Y."/>
            <person name="Barre-Sinoussi F."/>
            <person name="Girard M."/>
            <person name="Srinivasan A."/>
            <person name="Abimiku A.G."/>
            <person name="Shaw G.M."/>
            <person name="Sharp P.M."/>
            <person name="Hahn B.H."/>
        </authorList>
    </citation>
    <scope>NUCLEOTIDE SEQUENCE [GENOMIC DNA]</scope>
</reference>
<keyword id="KW-1073">Activation of host caspases by virus</keyword>
<keyword id="KW-0014">AIDS</keyword>
<keyword id="KW-0064">Aspartyl protease</keyword>
<keyword id="KW-0167">Capsid protein</keyword>
<keyword id="KW-0229">DNA integration</keyword>
<keyword id="KW-0233">DNA recombination</keyword>
<keyword id="KW-0238">DNA-binding</keyword>
<keyword id="KW-0239">DNA-directed DNA polymerase</keyword>
<keyword id="KW-0255">Endonuclease</keyword>
<keyword id="KW-1262">Eukaryotic host gene expression shutoff by virus</keyword>
<keyword id="KW-1193">Eukaryotic host translation shutoff by virus</keyword>
<keyword id="KW-1032">Host cell membrane</keyword>
<keyword id="KW-1035">Host cytoplasm</keyword>
<keyword id="KW-1039">Host endosome</keyword>
<keyword id="KW-1190">Host gene expression shutoff by virus</keyword>
<keyword id="KW-1043">Host membrane</keyword>
<keyword id="KW-1048">Host nucleus</keyword>
<keyword id="KW-0945">Host-virus interaction</keyword>
<keyword id="KW-0378">Hydrolase</keyword>
<keyword id="KW-0446">Lipid-binding</keyword>
<keyword id="KW-0449">Lipoprotein</keyword>
<keyword id="KW-0460">Magnesium</keyword>
<keyword id="KW-0472">Membrane</keyword>
<keyword id="KW-0479">Metal-binding</keyword>
<keyword id="KW-1119">Modulation of host cell apoptosis by virus</keyword>
<keyword id="KW-0511">Multifunctional enzyme</keyword>
<keyword id="KW-0519">Myristate</keyword>
<keyword id="KW-0540">Nuclease</keyword>
<keyword id="KW-0548">Nucleotidyltransferase</keyword>
<keyword id="KW-0597">Phosphoprotein</keyword>
<keyword id="KW-0645">Protease</keyword>
<keyword id="KW-0677">Repeat</keyword>
<keyword id="KW-0688">Ribosomal frameshifting</keyword>
<keyword id="KW-0694">RNA-binding</keyword>
<keyword id="KW-0695">RNA-directed DNA polymerase</keyword>
<keyword id="KW-0808">Transferase</keyword>
<keyword id="KW-1179">Viral genome integration</keyword>
<keyword id="KW-0543">Viral nucleoprotein</keyword>
<keyword id="KW-1163">Viral penetration into host nucleus</keyword>
<keyword id="KW-1188">Viral release from host cell</keyword>
<keyword id="KW-0946">Virion</keyword>
<keyword id="KW-0917">Virion maturation</keyword>
<keyword id="KW-1160">Virus entry into host cell</keyword>
<keyword id="KW-0862">Zinc</keyword>
<keyword id="KW-0863">Zinc-finger</keyword>
<dbReference type="EC" id="3.4.23.16"/>
<dbReference type="EC" id="2.7.7.49"/>
<dbReference type="EC" id="2.7.7.7"/>
<dbReference type="EC" id="3.1.26.13"/>
<dbReference type="EC" id="3.1.13.2"/>
<dbReference type="EC" id="2.7.7.-" evidence="5"/>
<dbReference type="EC" id="3.1.-.-" evidence="5"/>
<dbReference type="EMBL" id="U88826">
    <property type="protein sequence ID" value="AAC32654.1"/>
    <property type="status" value="ALT_SEQ"/>
    <property type="molecule type" value="Genomic_DNA"/>
</dbReference>
<dbReference type="SMR" id="O41798"/>
<dbReference type="MEROPS" id="A02.001"/>
<dbReference type="PRO" id="PR:O41798"/>
<dbReference type="Proteomes" id="UP000128912">
    <property type="component" value="Segment"/>
</dbReference>
<dbReference type="GO" id="GO:0043657">
    <property type="term" value="C:host cell"/>
    <property type="evidence" value="ECO:0007669"/>
    <property type="project" value="GOC"/>
</dbReference>
<dbReference type="GO" id="GO:0042025">
    <property type="term" value="C:host cell nucleus"/>
    <property type="evidence" value="ECO:0007669"/>
    <property type="project" value="UniProtKB-SubCell"/>
</dbReference>
<dbReference type="GO" id="GO:0020002">
    <property type="term" value="C:host cell plasma membrane"/>
    <property type="evidence" value="ECO:0007669"/>
    <property type="project" value="UniProtKB-SubCell"/>
</dbReference>
<dbReference type="GO" id="GO:0072494">
    <property type="term" value="C:host multivesicular body"/>
    <property type="evidence" value="ECO:0007669"/>
    <property type="project" value="UniProtKB-SubCell"/>
</dbReference>
<dbReference type="GO" id="GO:0016020">
    <property type="term" value="C:membrane"/>
    <property type="evidence" value="ECO:0007669"/>
    <property type="project" value="UniProtKB-KW"/>
</dbReference>
<dbReference type="GO" id="GO:0019013">
    <property type="term" value="C:viral nucleocapsid"/>
    <property type="evidence" value="ECO:0007669"/>
    <property type="project" value="UniProtKB-KW"/>
</dbReference>
<dbReference type="GO" id="GO:0055036">
    <property type="term" value="C:virion membrane"/>
    <property type="evidence" value="ECO:0007669"/>
    <property type="project" value="UniProtKB-SubCell"/>
</dbReference>
<dbReference type="GO" id="GO:0004190">
    <property type="term" value="F:aspartic-type endopeptidase activity"/>
    <property type="evidence" value="ECO:0007669"/>
    <property type="project" value="UniProtKB-KW"/>
</dbReference>
<dbReference type="GO" id="GO:0003677">
    <property type="term" value="F:DNA binding"/>
    <property type="evidence" value="ECO:0007669"/>
    <property type="project" value="UniProtKB-KW"/>
</dbReference>
<dbReference type="GO" id="GO:0003887">
    <property type="term" value="F:DNA-directed DNA polymerase activity"/>
    <property type="evidence" value="ECO:0007669"/>
    <property type="project" value="UniProtKB-KW"/>
</dbReference>
<dbReference type="GO" id="GO:0004533">
    <property type="term" value="F:exoribonuclease H activity"/>
    <property type="evidence" value="ECO:0007669"/>
    <property type="project" value="UniProtKB-EC"/>
</dbReference>
<dbReference type="GO" id="GO:0008289">
    <property type="term" value="F:lipid binding"/>
    <property type="evidence" value="ECO:0007669"/>
    <property type="project" value="UniProtKB-KW"/>
</dbReference>
<dbReference type="GO" id="GO:0035613">
    <property type="term" value="F:RNA stem-loop binding"/>
    <property type="evidence" value="ECO:0007669"/>
    <property type="project" value="TreeGrafter"/>
</dbReference>
<dbReference type="GO" id="GO:0003964">
    <property type="term" value="F:RNA-directed DNA polymerase activity"/>
    <property type="evidence" value="ECO:0007669"/>
    <property type="project" value="UniProtKB-KW"/>
</dbReference>
<dbReference type="GO" id="GO:0004523">
    <property type="term" value="F:RNA-DNA hybrid ribonuclease activity"/>
    <property type="evidence" value="ECO:0007669"/>
    <property type="project" value="InterPro"/>
</dbReference>
<dbReference type="GO" id="GO:0005198">
    <property type="term" value="F:structural molecule activity"/>
    <property type="evidence" value="ECO:0007669"/>
    <property type="project" value="InterPro"/>
</dbReference>
<dbReference type="GO" id="GO:0008270">
    <property type="term" value="F:zinc ion binding"/>
    <property type="evidence" value="ECO:0007669"/>
    <property type="project" value="UniProtKB-KW"/>
</dbReference>
<dbReference type="GO" id="GO:0015074">
    <property type="term" value="P:DNA integration"/>
    <property type="evidence" value="ECO:0007669"/>
    <property type="project" value="UniProtKB-KW"/>
</dbReference>
<dbReference type="GO" id="GO:0006310">
    <property type="term" value="P:DNA recombination"/>
    <property type="evidence" value="ECO:0007669"/>
    <property type="project" value="UniProtKB-KW"/>
</dbReference>
<dbReference type="GO" id="GO:0075713">
    <property type="term" value="P:establishment of integrated proviral latency"/>
    <property type="evidence" value="ECO:0007669"/>
    <property type="project" value="UniProtKB-KW"/>
</dbReference>
<dbReference type="GO" id="GO:0006508">
    <property type="term" value="P:proteolysis"/>
    <property type="evidence" value="ECO:0007669"/>
    <property type="project" value="UniProtKB-KW"/>
</dbReference>
<dbReference type="GO" id="GO:0046718">
    <property type="term" value="P:symbiont entry into host cell"/>
    <property type="evidence" value="ECO:0007669"/>
    <property type="project" value="UniProtKB-KW"/>
</dbReference>
<dbReference type="GO" id="GO:0052151">
    <property type="term" value="P:symbiont-mediated activation of host apoptosis"/>
    <property type="evidence" value="ECO:0007669"/>
    <property type="project" value="UniProtKB-KW"/>
</dbReference>
<dbReference type="GO" id="GO:0039657">
    <property type="term" value="P:symbiont-mediated suppression of host gene expression"/>
    <property type="evidence" value="ECO:0007669"/>
    <property type="project" value="UniProtKB-KW"/>
</dbReference>
<dbReference type="GO" id="GO:0044826">
    <property type="term" value="P:viral genome integration into host DNA"/>
    <property type="evidence" value="ECO:0007669"/>
    <property type="project" value="UniProtKB-KW"/>
</dbReference>
<dbReference type="GO" id="GO:0075732">
    <property type="term" value="P:viral penetration into host nucleus"/>
    <property type="evidence" value="ECO:0007669"/>
    <property type="project" value="UniProtKB-KW"/>
</dbReference>
<dbReference type="GO" id="GO:0075523">
    <property type="term" value="P:viral translational frameshifting"/>
    <property type="evidence" value="ECO:0007669"/>
    <property type="project" value="UniProtKB-KW"/>
</dbReference>
<dbReference type="CDD" id="cd05482">
    <property type="entry name" value="HIV_retropepsin_like"/>
    <property type="match status" value="1"/>
</dbReference>
<dbReference type="FunFam" id="1.10.1200.30:FF:000001">
    <property type="entry name" value="Gag polyprotein"/>
    <property type="match status" value="1"/>
</dbReference>
<dbReference type="FunFam" id="4.10.60.10:FF:000001">
    <property type="entry name" value="Gag polyprotein"/>
    <property type="match status" value="1"/>
</dbReference>
<dbReference type="FunFam" id="3.30.70.270:FF:000006">
    <property type="entry name" value="Gag-Pol polyprotein"/>
    <property type="match status" value="1"/>
</dbReference>
<dbReference type="FunFam" id="3.30.420.10:FF:000017">
    <property type="entry name" value="POL polyprotein"/>
    <property type="match status" value="1"/>
</dbReference>
<dbReference type="Gene3D" id="1.10.10.200">
    <property type="match status" value="1"/>
</dbReference>
<dbReference type="Gene3D" id="1.10.1200.30">
    <property type="match status" value="1"/>
</dbReference>
<dbReference type="Gene3D" id="3.30.70.270">
    <property type="match status" value="3"/>
</dbReference>
<dbReference type="Gene3D" id="2.40.70.10">
    <property type="entry name" value="Acid Proteases"/>
    <property type="match status" value="1"/>
</dbReference>
<dbReference type="Gene3D" id="3.10.10.10">
    <property type="entry name" value="HIV Type 1 Reverse Transcriptase, subunit A, domain 1"/>
    <property type="match status" value="1"/>
</dbReference>
<dbReference type="Gene3D" id="1.10.375.10">
    <property type="entry name" value="Human Immunodeficiency Virus Type 1 Capsid Protein"/>
    <property type="match status" value="1"/>
</dbReference>
<dbReference type="Gene3D" id="1.10.150.90">
    <property type="entry name" value="Immunodeficiency lentiviruses, gag gene matrix protein p17"/>
    <property type="match status" value="1"/>
</dbReference>
<dbReference type="Gene3D" id="2.30.30.10">
    <property type="entry name" value="Integrase, C-terminal domain superfamily, retroviral"/>
    <property type="match status" value="1"/>
</dbReference>
<dbReference type="Gene3D" id="3.30.420.10">
    <property type="entry name" value="Ribonuclease H-like superfamily/Ribonuclease H"/>
    <property type="match status" value="2"/>
</dbReference>
<dbReference type="Gene3D" id="1.20.5.760">
    <property type="entry name" value="Single helix bin"/>
    <property type="match status" value="1"/>
</dbReference>
<dbReference type="Gene3D" id="4.10.60.10">
    <property type="entry name" value="Zinc finger, CCHC-type"/>
    <property type="match status" value="1"/>
</dbReference>
<dbReference type="InterPro" id="IPR001969">
    <property type="entry name" value="Aspartic_peptidase_AS"/>
</dbReference>
<dbReference type="InterPro" id="IPR043502">
    <property type="entry name" value="DNA/RNA_pol_sf"/>
</dbReference>
<dbReference type="InterPro" id="IPR045345">
    <property type="entry name" value="Gag_p24_C"/>
</dbReference>
<dbReference type="InterPro" id="IPR017856">
    <property type="entry name" value="Integrase-like_N"/>
</dbReference>
<dbReference type="InterPro" id="IPR036862">
    <property type="entry name" value="Integrase_C_dom_sf_retrovir"/>
</dbReference>
<dbReference type="InterPro" id="IPR001037">
    <property type="entry name" value="Integrase_C_retrovir"/>
</dbReference>
<dbReference type="InterPro" id="IPR001584">
    <property type="entry name" value="Integrase_cat-core"/>
</dbReference>
<dbReference type="InterPro" id="IPR003308">
    <property type="entry name" value="Integrase_Zn-bd_dom_N"/>
</dbReference>
<dbReference type="InterPro" id="IPR000071">
    <property type="entry name" value="Lentvrl_matrix_N"/>
</dbReference>
<dbReference type="InterPro" id="IPR012344">
    <property type="entry name" value="Matrix_HIV/RSV_N"/>
</dbReference>
<dbReference type="InterPro" id="IPR001995">
    <property type="entry name" value="Peptidase_A2_cat"/>
</dbReference>
<dbReference type="InterPro" id="IPR021109">
    <property type="entry name" value="Peptidase_aspartic_dom_sf"/>
</dbReference>
<dbReference type="InterPro" id="IPR034170">
    <property type="entry name" value="Retropepsin-like_cat_dom"/>
</dbReference>
<dbReference type="InterPro" id="IPR018061">
    <property type="entry name" value="Retropepsins"/>
</dbReference>
<dbReference type="InterPro" id="IPR008916">
    <property type="entry name" value="Retrov_capsid_C"/>
</dbReference>
<dbReference type="InterPro" id="IPR008919">
    <property type="entry name" value="Retrov_capsid_N"/>
</dbReference>
<dbReference type="InterPro" id="IPR010999">
    <property type="entry name" value="Retrovr_matrix"/>
</dbReference>
<dbReference type="InterPro" id="IPR043128">
    <property type="entry name" value="Rev_trsase/Diguanyl_cyclase"/>
</dbReference>
<dbReference type="InterPro" id="IPR012337">
    <property type="entry name" value="RNaseH-like_sf"/>
</dbReference>
<dbReference type="InterPro" id="IPR002156">
    <property type="entry name" value="RNaseH_domain"/>
</dbReference>
<dbReference type="InterPro" id="IPR036397">
    <property type="entry name" value="RNaseH_sf"/>
</dbReference>
<dbReference type="InterPro" id="IPR000477">
    <property type="entry name" value="RT_dom"/>
</dbReference>
<dbReference type="InterPro" id="IPR010659">
    <property type="entry name" value="RVT_connect"/>
</dbReference>
<dbReference type="InterPro" id="IPR010661">
    <property type="entry name" value="RVT_thumb"/>
</dbReference>
<dbReference type="InterPro" id="IPR001878">
    <property type="entry name" value="Znf_CCHC"/>
</dbReference>
<dbReference type="InterPro" id="IPR036875">
    <property type="entry name" value="Znf_CCHC_sf"/>
</dbReference>
<dbReference type="PANTHER" id="PTHR41694">
    <property type="entry name" value="ENDOGENOUS RETROVIRUS GROUP K MEMBER POL PROTEIN"/>
    <property type="match status" value="1"/>
</dbReference>
<dbReference type="PANTHER" id="PTHR41694:SF3">
    <property type="entry name" value="RNA-DIRECTED DNA POLYMERASE-RELATED"/>
    <property type="match status" value="1"/>
</dbReference>
<dbReference type="Pfam" id="PF00540">
    <property type="entry name" value="Gag_p17"/>
    <property type="match status" value="1"/>
</dbReference>
<dbReference type="Pfam" id="PF19317">
    <property type="entry name" value="Gag_p24_C"/>
    <property type="match status" value="1"/>
</dbReference>
<dbReference type="Pfam" id="PF00552">
    <property type="entry name" value="IN_DBD_C"/>
    <property type="match status" value="1"/>
</dbReference>
<dbReference type="Pfam" id="PF02022">
    <property type="entry name" value="Integrase_Zn"/>
    <property type="match status" value="1"/>
</dbReference>
<dbReference type="Pfam" id="PF00075">
    <property type="entry name" value="RNase_H"/>
    <property type="match status" value="1"/>
</dbReference>
<dbReference type="Pfam" id="PF00665">
    <property type="entry name" value="rve"/>
    <property type="match status" value="1"/>
</dbReference>
<dbReference type="Pfam" id="PF00077">
    <property type="entry name" value="RVP"/>
    <property type="match status" value="1"/>
</dbReference>
<dbReference type="Pfam" id="PF00078">
    <property type="entry name" value="RVT_1"/>
    <property type="match status" value="1"/>
</dbReference>
<dbReference type="Pfam" id="PF06815">
    <property type="entry name" value="RVT_connect"/>
    <property type="match status" value="1"/>
</dbReference>
<dbReference type="Pfam" id="PF06817">
    <property type="entry name" value="RVT_thumb"/>
    <property type="match status" value="1"/>
</dbReference>
<dbReference type="Pfam" id="PF00098">
    <property type="entry name" value="zf-CCHC"/>
    <property type="match status" value="2"/>
</dbReference>
<dbReference type="PRINTS" id="PR00234">
    <property type="entry name" value="HIV1MATRIX"/>
</dbReference>
<dbReference type="SMART" id="SM00343">
    <property type="entry name" value="ZnF_C2HC"/>
    <property type="match status" value="2"/>
</dbReference>
<dbReference type="SUPFAM" id="SSF50630">
    <property type="entry name" value="Acid proteases"/>
    <property type="match status" value="1"/>
</dbReference>
<dbReference type="SUPFAM" id="SSF50122">
    <property type="entry name" value="DNA-binding domain of retroviral integrase"/>
    <property type="match status" value="1"/>
</dbReference>
<dbReference type="SUPFAM" id="SSF56672">
    <property type="entry name" value="DNA/RNA polymerases"/>
    <property type="match status" value="1"/>
</dbReference>
<dbReference type="SUPFAM" id="SSF46919">
    <property type="entry name" value="N-terminal Zn binding domain of HIV integrase"/>
    <property type="match status" value="1"/>
</dbReference>
<dbReference type="SUPFAM" id="SSF47836">
    <property type="entry name" value="Retroviral matrix proteins"/>
    <property type="match status" value="1"/>
</dbReference>
<dbReference type="SUPFAM" id="SSF47353">
    <property type="entry name" value="Retrovirus capsid dimerization domain-like"/>
    <property type="match status" value="1"/>
</dbReference>
<dbReference type="SUPFAM" id="SSF47943">
    <property type="entry name" value="Retrovirus capsid protein, N-terminal core domain"/>
    <property type="match status" value="1"/>
</dbReference>
<dbReference type="SUPFAM" id="SSF57756">
    <property type="entry name" value="Retrovirus zinc finger-like domains"/>
    <property type="match status" value="1"/>
</dbReference>
<dbReference type="SUPFAM" id="SSF53098">
    <property type="entry name" value="Ribonuclease H-like"/>
    <property type="match status" value="2"/>
</dbReference>
<dbReference type="PROSITE" id="PS50175">
    <property type="entry name" value="ASP_PROT_RETROV"/>
    <property type="match status" value="1"/>
</dbReference>
<dbReference type="PROSITE" id="PS00141">
    <property type="entry name" value="ASP_PROTEASE"/>
    <property type="match status" value="1"/>
</dbReference>
<dbReference type="PROSITE" id="PS50994">
    <property type="entry name" value="INTEGRASE"/>
    <property type="match status" value="1"/>
</dbReference>
<dbReference type="PROSITE" id="PS51027">
    <property type="entry name" value="INTEGRASE_DBD"/>
    <property type="match status" value="1"/>
</dbReference>
<dbReference type="PROSITE" id="PS50879">
    <property type="entry name" value="RNASE_H_1"/>
    <property type="match status" value="1"/>
</dbReference>
<dbReference type="PROSITE" id="PS50878">
    <property type="entry name" value="RT_POL"/>
    <property type="match status" value="1"/>
</dbReference>
<dbReference type="PROSITE" id="PS50158">
    <property type="entry name" value="ZF_CCHC"/>
    <property type="match status" value="2"/>
</dbReference>
<dbReference type="PROSITE" id="PS50876">
    <property type="entry name" value="ZF_INTEGRASE"/>
    <property type="match status" value="1"/>
</dbReference>
<protein>
    <recommendedName>
        <fullName>Gag-Pol polyprotein</fullName>
    </recommendedName>
    <alternativeName>
        <fullName>Pr160Gag-Pol</fullName>
    </alternativeName>
    <component>
        <recommendedName>
            <fullName>Matrix protein p17</fullName>
            <shortName>MA</shortName>
        </recommendedName>
    </component>
    <component>
        <recommendedName>
            <fullName>Capsid protein p24</fullName>
            <shortName>CA</shortName>
        </recommendedName>
    </component>
    <component>
        <recommendedName>
            <fullName evidence="7">Spacer peptide 1</fullName>
            <shortName>SP1</shortName>
        </recommendedName>
        <alternativeName>
            <fullName>p2</fullName>
        </alternativeName>
    </component>
    <component>
        <recommendedName>
            <fullName>Nucleocapsid protein p7</fullName>
            <shortName>NC</shortName>
        </recommendedName>
    </component>
    <component>
        <recommendedName>
            <fullName>Transframe peptide</fullName>
            <shortName>TF</shortName>
        </recommendedName>
    </component>
    <component>
        <recommendedName>
            <fullName>p6-pol</fullName>
            <shortName>p6*</shortName>
        </recommendedName>
    </component>
    <component>
        <recommendedName>
            <fullName>Protease</fullName>
            <ecNumber>3.4.23.16</ecNumber>
        </recommendedName>
        <alternativeName>
            <fullName>PR</fullName>
        </alternativeName>
        <alternativeName>
            <fullName>Retropepsin</fullName>
        </alternativeName>
    </component>
    <component>
        <recommendedName>
            <fullName>Reverse transcriptase/ribonuclease H</fullName>
            <ecNumber>2.7.7.49</ecNumber>
            <ecNumber>2.7.7.7</ecNumber>
            <ecNumber>3.1.26.13</ecNumber>
        </recommendedName>
        <alternativeName>
            <fullName>Exoribonuclease H</fullName>
            <ecNumber>3.1.13.2</ecNumber>
        </alternativeName>
        <alternativeName>
            <fullName>p66 RT</fullName>
        </alternativeName>
    </component>
    <component>
        <recommendedName>
            <fullName>p51 RT</fullName>
        </recommendedName>
    </component>
    <component>
        <recommendedName>
            <fullName>p15</fullName>
        </recommendedName>
    </component>
    <component>
        <recommendedName>
            <fullName>Integrase</fullName>
            <shortName>IN</shortName>
            <ecNumber evidence="5">2.7.7.-</ecNumber>
            <ecNumber evidence="5">3.1.-.-</ecNumber>
        </recommendedName>
    </component>
</protein>
<proteinExistence type="inferred from homology"/>
<organismHost>
    <name type="scientific">Homo sapiens</name>
    <name type="common">Human</name>
    <dbReference type="NCBI Taxonomy" id="9606"/>
</organismHost>